<comment type="function">
    <text evidence="1">RuBisCO catalyzes two reactions: the carboxylation of D-ribulose 1,5-bisphosphate, the primary event in carbon dioxide fixation, as well as the oxidative fragmentation of the pentose substrate in the photorespiration process. Both reactions occur simultaneously and in competition at the same active site.</text>
</comment>
<comment type="catalytic activity">
    <reaction evidence="1">
        <text>2 (2R)-3-phosphoglycerate + 2 H(+) = D-ribulose 1,5-bisphosphate + CO2 + H2O</text>
        <dbReference type="Rhea" id="RHEA:23124"/>
        <dbReference type="ChEBI" id="CHEBI:15377"/>
        <dbReference type="ChEBI" id="CHEBI:15378"/>
        <dbReference type="ChEBI" id="CHEBI:16526"/>
        <dbReference type="ChEBI" id="CHEBI:57870"/>
        <dbReference type="ChEBI" id="CHEBI:58272"/>
        <dbReference type="EC" id="4.1.1.39"/>
    </reaction>
</comment>
<comment type="catalytic activity">
    <reaction evidence="1">
        <text>D-ribulose 1,5-bisphosphate + O2 = 2-phosphoglycolate + (2R)-3-phosphoglycerate + 2 H(+)</text>
        <dbReference type="Rhea" id="RHEA:36631"/>
        <dbReference type="ChEBI" id="CHEBI:15378"/>
        <dbReference type="ChEBI" id="CHEBI:15379"/>
        <dbReference type="ChEBI" id="CHEBI:57870"/>
        <dbReference type="ChEBI" id="CHEBI:58033"/>
        <dbReference type="ChEBI" id="CHEBI:58272"/>
    </reaction>
</comment>
<comment type="cofactor">
    <cofactor evidence="1">
        <name>Mg(2+)</name>
        <dbReference type="ChEBI" id="CHEBI:18420"/>
    </cofactor>
    <text evidence="1">Binds 1 Mg(2+) ion per subunit.</text>
</comment>
<comment type="subunit">
    <text evidence="1">Heterohexadecamer of 8 large chains and 8 small chains; disulfide-linked. The disulfide link is formed within the large subunit homodimers.</text>
</comment>
<comment type="subcellular location">
    <subcellularLocation>
        <location>Plastid</location>
        <location>Chloroplast</location>
    </subcellularLocation>
</comment>
<comment type="PTM">
    <text evidence="1">The disulfide bond which can form in the large chain dimeric partners within the hexadecamer appears to be associated with oxidative stress and protein turnover.</text>
</comment>
<comment type="miscellaneous">
    <text evidence="1">The basic functional RuBisCO is composed of a large chain homodimer in a 'head-to-tail' conformation. In form I RuBisCO this homodimer is arranged in a barrel-like tetramer with the small subunits forming a tetrameric 'cap' on each end of the 'barrel'.</text>
</comment>
<comment type="similarity">
    <text evidence="1">Belongs to the RuBisCO large chain family. Type I subfamily.</text>
</comment>
<organism>
    <name type="scientific">Coffea arabica</name>
    <name type="common">Arabian coffee</name>
    <dbReference type="NCBI Taxonomy" id="13443"/>
    <lineage>
        <taxon>Eukaryota</taxon>
        <taxon>Viridiplantae</taxon>
        <taxon>Streptophyta</taxon>
        <taxon>Embryophyta</taxon>
        <taxon>Tracheophyta</taxon>
        <taxon>Spermatophyta</taxon>
        <taxon>Magnoliopsida</taxon>
        <taxon>eudicotyledons</taxon>
        <taxon>Gunneridae</taxon>
        <taxon>Pentapetalae</taxon>
        <taxon>asterids</taxon>
        <taxon>lamiids</taxon>
        <taxon>Gentianales</taxon>
        <taxon>Rubiaceae</taxon>
        <taxon>Ixoroideae</taxon>
        <taxon>Gardenieae complex</taxon>
        <taxon>Bertiereae - Coffeeae clade</taxon>
        <taxon>Coffeeae</taxon>
        <taxon>Coffea</taxon>
    </lineage>
</organism>
<keyword id="KW-0007">Acetylation</keyword>
<keyword id="KW-0113">Calvin cycle</keyword>
<keyword id="KW-0120">Carbon dioxide fixation</keyword>
<keyword id="KW-0150">Chloroplast</keyword>
<keyword id="KW-1015">Disulfide bond</keyword>
<keyword id="KW-0456">Lyase</keyword>
<keyword id="KW-0460">Magnesium</keyword>
<keyword id="KW-0479">Metal-binding</keyword>
<keyword id="KW-0488">Methylation</keyword>
<keyword id="KW-0503">Monooxygenase</keyword>
<keyword id="KW-0560">Oxidoreductase</keyword>
<keyword id="KW-0601">Photorespiration</keyword>
<keyword id="KW-0602">Photosynthesis</keyword>
<keyword id="KW-0934">Plastid</keyword>
<keyword id="KW-1185">Reference proteome</keyword>
<proteinExistence type="inferred from homology"/>
<dbReference type="EC" id="4.1.1.39" evidence="1"/>
<dbReference type="EMBL" id="EF044213">
    <property type="protein sequence ID" value="ABJ89687.1"/>
    <property type="molecule type" value="Genomic_DNA"/>
</dbReference>
<dbReference type="EMBL" id="X81095">
    <property type="protein sequence ID" value="CAA57001.1"/>
    <property type="molecule type" value="Genomic_DNA"/>
</dbReference>
<dbReference type="EMBL" id="X83631">
    <property type="protein sequence ID" value="CAA58609.1"/>
    <property type="molecule type" value="Genomic_DNA"/>
</dbReference>
<dbReference type="PIR" id="S47224">
    <property type="entry name" value="S47224"/>
</dbReference>
<dbReference type="RefSeq" id="YP_817490.1">
    <property type="nucleotide sequence ID" value="NC_008535.1"/>
</dbReference>
<dbReference type="SMR" id="P48694"/>
<dbReference type="GeneID" id="4421771"/>
<dbReference type="OrthoDB" id="563909at2759"/>
<dbReference type="Proteomes" id="UP000515148">
    <property type="component" value="Chloroplast Pltd"/>
</dbReference>
<dbReference type="GO" id="GO:0009507">
    <property type="term" value="C:chloroplast"/>
    <property type="evidence" value="ECO:0007669"/>
    <property type="project" value="UniProtKB-SubCell"/>
</dbReference>
<dbReference type="GO" id="GO:0000287">
    <property type="term" value="F:magnesium ion binding"/>
    <property type="evidence" value="ECO:0007669"/>
    <property type="project" value="UniProtKB-UniRule"/>
</dbReference>
<dbReference type="GO" id="GO:0004497">
    <property type="term" value="F:monooxygenase activity"/>
    <property type="evidence" value="ECO:0007669"/>
    <property type="project" value="UniProtKB-KW"/>
</dbReference>
<dbReference type="GO" id="GO:0016984">
    <property type="term" value="F:ribulose-bisphosphate carboxylase activity"/>
    <property type="evidence" value="ECO:0007669"/>
    <property type="project" value="UniProtKB-UniRule"/>
</dbReference>
<dbReference type="GO" id="GO:0009853">
    <property type="term" value="P:photorespiration"/>
    <property type="evidence" value="ECO:0007669"/>
    <property type="project" value="UniProtKB-KW"/>
</dbReference>
<dbReference type="GO" id="GO:0019253">
    <property type="term" value="P:reductive pentose-phosphate cycle"/>
    <property type="evidence" value="ECO:0007669"/>
    <property type="project" value="UniProtKB-UniRule"/>
</dbReference>
<dbReference type="CDD" id="cd08212">
    <property type="entry name" value="RuBisCO_large_I"/>
    <property type="match status" value="1"/>
</dbReference>
<dbReference type="FunFam" id="3.20.20.110:FF:000001">
    <property type="entry name" value="Ribulose bisphosphate carboxylase large chain"/>
    <property type="match status" value="1"/>
</dbReference>
<dbReference type="FunFam" id="3.30.70.150:FF:000001">
    <property type="entry name" value="Ribulose bisphosphate carboxylase large chain"/>
    <property type="match status" value="1"/>
</dbReference>
<dbReference type="Gene3D" id="3.20.20.110">
    <property type="entry name" value="Ribulose bisphosphate carboxylase, large subunit, C-terminal domain"/>
    <property type="match status" value="1"/>
</dbReference>
<dbReference type="Gene3D" id="3.30.70.150">
    <property type="entry name" value="RuBisCO large subunit, N-terminal domain"/>
    <property type="match status" value="1"/>
</dbReference>
<dbReference type="HAMAP" id="MF_01338">
    <property type="entry name" value="RuBisCO_L_type1"/>
    <property type="match status" value="1"/>
</dbReference>
<dbReference type="InterPro" id="IPR033966">
    <property type="entry name" value="RuBisCO"/>
</dbReference>
<dbReference type="InterPro" id="IPR020878">
    <property type="entry name" value="RuBisCo_large_chain_AS"/>
</dbReference>
<dbReference type="InterPro" id="IPR000685">
    <property type="entry name" value="RuBisCO_lsu_C"/>
</dbReference>
<dbReference type="InterPro" id="IPR036376">
    <property type="entry name" value="RuBisCO_lsu_C_sf"/>
</dbReference>
<dbReference type="InterPro" id="IPR017443">
    <property type="entry name" value="RuBisCO_lsu_fd_N"/>
</dbReference>
<dbReference type="InterPro" id="IPR036422">
    <property type="entry name" value="RuBisCO_lsu_N_sf"/>
</dbReference>
<dbReference type="InterPro" id="IPR020888">
    <property type="entry name" value="RuBisCO_lsuI"/>
</dbReference>
<dbReference type="NCBIfam" id="NF003252">
    <property type="entry name" value="PRK04208.1"/>
    <property type="match status" value="1"/>
</dbReference>
<dbReference type="PANTHER" id="PTHR42704">
    <property type="entry name" value="RIBULOSE BISPHOSPHATE CARBOXYLASE"/>
    <property type="match status" value="1"/>
</dbReference>
<dbReference type="PANTHER" id="PTHR42704:SF15">
    <property type="entry name" value="RIBULOSE BISPHOSPHATE CARBOXYLASE LARGE CHAIN"/>
    <property type="match status" value="1"/>
</dbReference>
<dbReference type="Pfam" id="PF00016">
    <property type="entry name" value="RuBisCO_large"/>
    <property type="match status" value="1"/>
</dbReference>
<dbReference type="Pfam" id="PF02788">
    <property type="entry name" value="RuBisCO_large_N"/>
    <property type="match status" value="1"/>
</dbReference>
<dbReference type="SFLD" id="SFLDG01052">
    <property type="entry name" value="RuBisCO"/>
    <property type="match status" value="1"/>
</dbReference>
<dbReference type="SFLD" id="SFLDS00014">
    <property type="entry name" value="RuBisCO"/>
    <property type="match status" value="1"/>
</dbReference>
<dbReference type="SFLD" id="SFLDG00301">
    <property type="entry name" value="RuBisCO-like_proteins"/>
    <property type="match status" value="1"/>
</dbReference>
<dbReference type="SUPFAM" id="SSF51649">
    <property type="entry name" value="RuBisCo, C-terminal domain"/>
    <property type="match status" value="1"/>
</dbReference>
<dbReference type="SUPFAM" id="SSF54966">
    <property type="entry name" value="RuBisCO, large subunit, small (N-terminal) domain"/>
    <property type="match status" value="1"/>
</dbReference>
<dbReference type="PROSITE" id="PS00157">
    <property type="entry name" value="RUBISCO_LARGE"/>
    <property type="match status" value="1"/>
</dbReference>
<feature type="propeptide" id="PRO_0000031181" evidence="1">
    <location>
        <begin position="1"/>
        <end position="2"/>
    </location>
</feature>
<feature type="chain" id="PRO_0000031182" description="Ribulose bisphosphate carboxylase large chain">
    <location>
        <begin position="3"/>
        <end position="481"/>
    </location>
</feature>
<feature type="active site" description="Proton acceptor" evidence="1">
    <location>
        <position position="175"/>
    </location>
</feature>
<feature type="active site" description="Proton acceptor" evidence="1">
    <location>
        <position position="294"/>
    </location>
</feature>
<feature type="binding site" description="in homodimeric partner" evidence="1">
    <location>
        <position position="123"/>
    </location>
    <ligand>
        <name>substrate</name>
    </ligand>
</feature>
<feature type="binding site" evidence="1">
    <location>
        <position position="173"/>
    </location>
    <ligand>
        <name>substrate</name>
    </ligand>
</feature>
<feature type="binding site" evidence="1">
    <location>
        <position position="177"/>
    </location>
    <ligand>
        <name>substrate</name>
    </ligand>
</feature>
<feature type="binding site" description="via carbamate group" evidence="1">
    <location>
        <position position="201"/>
    </location>
    <ligand>
        <name>Mg(2+)</name>
        <dbReference type="ChEBI" id="CHEBI:18420"/>
    </ligand>
</feature>
<feature type="binding site" evidence="1">
    <location>
        <position position="203"/>
    </location>
    <ligand>
        <name>Mg(2+)</name>
        <dbReference type="ChEBI" id="CHEBI:18420"/>
    </ligand>
</feature>
<feature type="binding site" evidence="1">
    <location>
        <position position="204"/>
    </location>
    <ligand>
        <name>Mg(2+)</name>
        <dbReference type="ChEBI" id="CHEBI:18420"/>
    </ligand>
</feature>
<feature type="binding site" evidence="1">
    <location>
        <position position="295"/>
    </location>
    <ligand>
        <name>substrate</name>
    </ligand>
</feature>
<feature type="binding site" evidence="1">
    <location>
        <position position="327"/>
    </location>
    <ligand>
        <name>substrate</name>
    </ligand>
</feature>
<feature type="binding site" evidence="1">
    <location>
        <position position="379"/>
    </location>
    <ligand>
        <name>substrate</name>
    </ligand>
</feature>
<feature type="site" description="Transition state stabilizer" evidence="1">
    <location>
        <position position="334"/>
    </location>
</feature>
<feature type="modified residue" description="N-acetylproline" evidence="1">
    <location>
        <position position="3"/>
    </location>
</feature>
<feature type="modified residue" description="N6,N6,N6-trimethyllysine" evidence="1">
    <location>
        <position position="14"/>
    </location>
</feature>
<feature type="modified residue" description="N6-carboxylysine" evidence="1">
    <location>
        <position position="201"/>
    </location>
</feature>
<feature type="disulfide bond" description="Interchain; in linked form" evidence="1">
    <location>
        <position position="247"/>
    </location>
</feature>
<feature type="sequence conflict" description="In Ref. 2 and 3; CAA58609/CAA57001." evidence="2" ref="2 3">
    <original>P</original>
    <variation>H</variation>
    <location>
        <position position="89"/>
    </location>
</feature>
<feature type="sequence conflict" description="In Ref. 2 and 3; CAA58609/CAA57001." evidence="2" ref="2 3">
    <original>M</original>
    <variation>I</variation>
    <location>
        <position position="387"/>
    </location>
</feature>
<accession>P48694</accession>
<accession>A0A343</accession>
<reference key="1">
    <citation type="journal article" date="2007" name="Plant Biotechnol. J.">
        <title>The complete nucleotide sequence of the coffee (Coffea arabica L.) chloroplast genome: organization and implications for biotechnology and phylogenetic relationships amongst angiosperms.</title>
        <authorList>
            <person name="Samson N."/>
            <person name="Bausher M.G."/>
            <person name="Lee S.-B."/>
            <person name="Jansen R.K."/>
            <person name="Daniell H."/>
        </authorList>
    </citation>
    <scope>NUCLEOTIDE SEQUENCE [LARGE SCALE GENOMIC DNA]</scope>
</reference>
<reference key="2">
    <citation type="journal article" date="1995" name="J. Mol. Evol.">
        <title>Comparison of the evolution of ribulose-1, 5-biphosphate carboxylase (rbcL) and atpB-rbcL noncoding spacer sequences in a recent plant group, the tribe Rubieae (Rubiaceae).</title>
        <authorList>
            <person name="Manen J.F."/>
            <person name="Natali A."/>
        </authorList>
    </citation>
    <scope>NUCLEOTIDE SEQUENCE [GENOMIC DNA] OF 1-453</scope>
</reference>
<reference key="3">
    <citation type="journal article" date="1995" name="Ann. Mo. Bot. Gard.">
        <title>Subfamilial and tribal relationships in the Rubiaceae based on rbcL sequence data.</title>
        <authorList>
            <person name="Bremer B."/>
            <person name="Andreasen K."/>
            <person name="Olsson D."/>
        </authorList>
    </citation>
    <scope>NUCLEOTIDE SEQUENCE [GENOMIC DNA] OF 9-481</scope>
</reference>
<geneLocation type="chloroplast"/>
<name>RBL_COFAR</name>
<protein>
    <recommendedName>
        <fullName evidence="1">Ribulose bisphosphate carboxylase large chain</fullName>
        <shortName evidence="1">RuBisCO large subunit</shortName>
        <ecNumber evidence="1">4.1.1.39</ecNumber>
    </recommendedName>
</protein>
<sequence>MSPQTETKASVGFKAGVKEYKLTYYTPEYETKDTDILAAFRVTPQPGVPPEEAGAAVAAESSTGTWTAVWTDGLTSLDRYKGRCYHIEPVPGEENQYIAYVAYPLDLFEEGSVTNMFTSIVGNVFGFKALRALRLEDLRVPPAYIKTFQGPPHGIQVERDKLNKYGRPLLGCTIKPKLGLSAKNYGRAVYECLRGGLDFTKDDENVNSQPFMRWRDRFCFCAEALFKAQAETGEIKGHYLNATAGTCEEMIKRAVFARELGVPIVMHDYLTGGFTANTSLAHYCRDNGLLLHIHRAMHAVIDRQKNHGMHFRVLAKGLRMSGGDHIHAGTVVGKLEGERDITLGFVDLLRDDFIEKDRSRGIYFTQDWVSLPGVIPVASGGIHVWHMPALTEIFGDDSVLQFGGGTLGHPWGNAPGAVANRVALEACVKARNEGRDLAAEGNEIIREASKWSPELAAACEVWKEIRFNFEAMDKLDKEKDL</sequence>
<gene>
    <name evidence="1" type="primary">rbcL</name>
</gene>
<evidence type="ECO:0000255" key="1">
    <source>
        <dbReference type="HAMAP-Rule" id="MF_01338"/>
    </source>
</evidence>
<evidence type="ECO:0000305" key="2"/>